<gene>
    <name evidence="1" type="primary">mtgA</name>
    <name type="ordered locus">BMEI0271</name>
</gene>
<keyword id="KW-0997">Cell inner membrane</keyword>
<keyword id="KW-1003">Cell membrane</keyword>
<keyword id="KW-0133">Cell shape</keyword>
<keyword id="KW-0961">Cell wall biogenesis/degradation</keyword>
<keyword id="KW-0328">Glycosyltransferase</keyword>
<keyword id="KW-0472">Membrane</keyword>
<keyword id="KW-0573">Peptidoglycan synthesis</keyword>
<keyword id="KW-0808">Transferase</keyword>
<keyword id="KW-0812">Transmembrane</keyword>
<keyword id="KW-1133">Transmembrane helix</keyword>
<accession>Q8YJ15</accession>
<protein>
    <recommendedName>
        <fullName evidence="1">Biosynthetic peptidoglycan transglycosylase</fullName>
        <ecNumber evidence="1">2.4.99.28</ecNumber>
    </recommendedName>
    <alternativeName>
        <fullName evidence="1">Glycan polymerase</fullName>
    </alternativeName>
    <alternativeName>
        <fullName evidence="1">Peptidoglycan glycosyltransferase MtgA</fullName>
        <shortName evidence="1">PGT</shortName>
    </alternativeName>
</protein>
<evidence type="ECO:0000255" key="1">
    <source>
        <dbReference type="HAMAP-Rule" id="MF_00766"/>
    </source>
</evidence>
<evidence type="ECO:0000305" key="2"/>
<reference key="1">
    <citation type="journal article" date="2002" name="Proc. Natl. Acad. Sci. U.S.A.">
        <title>The genome sequence of the facultative intracellular pathogen Brucella melitensis.</title>
        <authorList>
            <person name="DelVecchio V.G."/>
            <person name="Kapatral V."/>
            <person name="Redkar R.J."/>
            <person name="Patra G."/>
            <person name="Mujer C."/>
            <person name="Los T."/>
            <person name="Ivanova N."/>
            <person name="Anderson I."/>
            <person name="Bhattacharyya A."/>
            <person name="Lykidis A."/>
            <person name="Reznik G."/>
            <person name="Jablonski L."/>
            <person name="Larsen N."/>
            <person name="D'Souza M."/>
            <person name="Bernal A."/>
            <person name="Mazur M."/>
            <person name="Goltsman E."/>
            <person name="Selkov E."/>
            <person name="Elzer P.H."/>
            <person name="Hagius S."/>
            <person name="O'Callaghan D."/>
            <person name="Letesson J.-J."/>
            <person name="Haselkorn R."/>
            <person name="Kyrpides N.C."/>
            <person name="Overbeek R."/>
        </authorList>
    </citation>
    <scope>NUCLEOTIDE SEQUENCE [LARGE SCALE GENOMIC DNA]</scope>
    <source>
        <strain>ATCC 23456 / CCUG 17765 / NCTC 10094 / 16M</strain>
    </source>
</reference>
<comment type="function">
    <text evidence="1">Peptidoglycan polymerase that catalyzes glycan chain elongation from lipid-linked precursors.</text>
</comment>
<comment type="catalytic activity">
    <reaction evidence="1">
        <text>[GlcNAc-(1-&gt;4)-Mur2Ac(oyl-L-Ala-gamma-D-Glu-L-Lys-D-Ala-D-Ala)](n)-di-trans,octa-cis-undecaprenyl diphosphate + beta-D-GlcNAc-(1-&gt;4)-Mur2Ac(oyl-L-Ala-gamma-D-Glu-L-Lys-D-Ala-D-Ala)-di-trans,octa-cis-undecaprenyl diphosphate = [GlcNAc-(1-&gt;4)-Mur2Ac(oyl-L-Ala-gamma-D-Glu-L-Lys-D-Ala-D-Ala)](n+1)-di-trans,octa-cis-undecaprenyl diphosphate + di-trans,octa-cis-undecaprenyl diphosphate + H(+)</text>
        <dbReference type="Rhea" id="RHEA:23708"/>
        <dbReference type="Rhea" id="RHEA-COMP:9602"/>
        <dbReference type="Rhea" id="RHEA-COMP:9603"/>
        <dbReference type="ChEBI" id="CHEBI:15378"/>
        <dbReference type="ChEBI" id="CHEBI:58405"/>
        <dbReference type="ChEBI" id="CHEBI:60033"/>
        <dbReference type="ChEBI" id="CHEBI:78435"/>
        <dbReference type="EC" id="2.4.99.28"/>
    </reaction>
</comment>
<comment type="pathway">
    <text evidence="1">Cell wall biogenesis; peptidoglycan biosynthesis.</text>
</comment>
<comment type="subcellular location">
    <subcellularLocation>
        <location evidence="1">Cell inner membrane</location>
        <topology evidence="1">Single-pass membrane protein</topology>
    </subcellularLocation>
</comment>
<comment type="similarity">
    <text evidence="1">Belongs to the glycosyltransferase 51 family.</text>
</comment>
<comment type="sequence caution" evidence="2">
    <conflict type="erroneous initiation">
        <sequence resource="EMBL-CDS" id="AAL51453"/>
    </conflict>
</comment>
<sequence length="224" mass="24712">MWGSRIAVALRILVVLAILPVFLLLVYSLPFVRPVSTLMVKDYALLQGVNRQWVDIENIAPVLVNSVMMAEDGQFCSHGGVDWHQLGLVLDDAGDGGPSRGASTITMQMVKNLFLWNGRSYLRKGLEFPLALIADAVLSRKRIMEIYLNIAEWGPGIYGIEAAARHYFKRSAAKLTARQAALLAVTLPNPALRNPAKPTRNMQRIARIVAGRAMRSGPYVTCVK</sequence>
<name>MTGA_BRUME</name>
<proteinExistence type="inferred from homology"/>
<organism>
    <name type="scientific">Brucella melitensis biotype 1 (strain ATCC 23456 / CCUG 17765 / NCTC 10094 / 16M)</name>
    <dbReference type="NCBI Taxonomy" id="224914"/>
    <lineage>
        <taxon>Bacteria</taxon>
        <taxon>Pseudomonadati</taxon>
        <taxon>Pseudomonadota</taxon>
        <taxon>Alphaproteobacteria</taxon>
        <taxon>Hyphomicrobiales</taxon>
        <taxon>Brucellaceae</taxon>
        <taxon>Brucella/Ochrobactrum group</taxon>
        <taxon>Brucella</taxon>
    </lineage>
</organism>
<dbReference type="EC" id="2.4.99.28" evidence="1"/>
<dbReference type="EMBL" id="AE008917">
    <property type="protein sequence ID" value="AAL51453.1"/>
    <property type="status" value="ALT_INIT"/>
    <property type="molecule type" value="Genomic_DNA"/>
</dbReference>
<dbReference type="PIR" id="AB3286">
    <property type="entry name" value="AB3286"/>
</dbReference>
<dbReference type="SMR" id="Q8YJ15"/>
<dbReference type="CAZy" id="GT51">
    <property type="family name" value="Glycosyltransferase Family 51"/>
</dbReference>
<dbReference type="KEGG" id="bme:BMEI0271"/>
<dbReference type="eggNOG" id="COG0744">
    <property type="taxonomic scope" value="Bacteria"/>
</dbReference>
<dbReference type="UniPathway" id="UPA00219"/>
<dbReference type="PRO" id="PR:Q8YJ15"/>
<dbReference type="Proteomes" id="UP000000419">
    <property type="component" value="Chromosome I"/>
</dbReference>
<dbReference type="GO" id="GO:0009274">
    <property type="term" value="C:peptidoglycan-based cell wall"/>
    <property type="evidence" value="ECO:0007669"/>
    <property type="project" value="InterPro"/>
</dbReference>
<dbReference type="GO" id="GO:0005886">
    <property type="term" value="C:plasma membrane"/>
    <property type="evidence" value="ECO:0007669"/>
    <property type="project" value="UniProtKB-SubCell"/>
</dbReference>
<dbReference type="GO" id="GO:0016763">
    <property type="term" value="F:pentosyltransferase activity"/>
    <property type="evidence" value="ECO:0007669"/>
    <property type="project" value="InterPro"/>
</dbReference>
<dbReference type="GO" id="GO:0008955">
    <property type="term" value="F:peptidoglycan glycosyltransferase activity"/>
    <property type="evidence" value="ECO:0007669"/>
    <property type="project" value="UniProtKB-UniRule"/>
</dbReference>
<dbReference type="GO" id="GO:0071555">
    <property type="term" value="P:cell wall organization"/>
    <property type="evidence" value="ECO:0007669"/>
    <property type="project" value="UniProtKB-KW"/>
</dbReference>
<dbReference type="GO" id="GO:0009252">
    <property type="term" value="P:peptidoglycan biosynthetic process"/>
    <property type="evidence" value="ECO:0007669"/>
    <property type="project" value="UniProtKB-UniRule"/>
</dbReference>
<dbReference type="GO" id="GO:0008360">
    <property type="term" value="P:regulation of cell shape"/>
    <property type="evidence" value="ECO:0007669"/>
    <property type="project" value="UniProtKB-KW"/>
</dbReference>
<dbReference type="Gene3D" id="1.10.3810.10">
    <property type="entry name" value="Biosynthetic peptidoglycan transglycosylase-like"/>
    <property type="match status" value="1"/>
</dbReference>
<dbReference type="HAMAP" id="MF_00766">
    <property type="entry name" value="PGT_MtgA"/>
    <property type="match status" value="1"/>
</dbReference>
<dbReference type="InterPro" id="IPR001264">
    <property type="entry name" value="Glyco_trans_51"/>
</dbReference>
<dbReference type="InterPro" id="IPR023346">
    <property type="entry name" value="Lysozyme-like_dom_sf"/>
</dbReference>
<dbReference type="InterPro" id="IPR036950">
    <property type="entry name" value="PBP_transglycosylase"/>
</dbReference>
<dbReference type="InterPro" id="IPR011812">
    <property type="entry name" value="Pep_trsgly"/>
</dbReference>
<dbReference type="NCBIfam" id="TIGR02070">
    <property type="entry name" value="mono_pep_trsgly"/>
    <property type="match status" value="1"/>
</dbReference>
<dbReference type="PANTHER" id="PTHR30400:SF0">
    <property type="entry name" value="BIOSYNTHETIC PEPTIDOGLYCAN TRANSGLYCOSYLASE"/>
    <property type="match status" value="1"/>
</dbReference>
<dbReference type="PANTHER" id="PTHR30400">
    <property type="entry name" value="MONOFUNCTIONAL BIOSYNTHETIC PEPTIDOGLYCAN TRANSGLYCOSYLASE"/>
    <property type="match status" value="1"/>
</dbReference>
<dbReference type="Pfam" id="PF00912">
    <property type="entry name" value="Transgly"/>
    <property type="match status" value="1"/>
</dbReference>
<dbReference type="SUPFAM" id="SSF53955">
    <property type="entry name" value="Lysozyme-like"/>
    <property type="match status" value="1"/>
</dbReference>
<feature type="chain" id="PRO_0000083121" description="Biosynthetic peptidoglycan transglycosylase">
    <location>
        <begin position="1"/>
        <end position="224"/>
    </location>
</feature>
<feature type="transmembrane region" description="Helical" evidence="1">
    <location>
        <begin position="12"/>
        <end position="32"/>
    </location>
</feature>